<accession>Q12AU9</accession>
<comment type="function">
    <text evidence="1">Required for maturation of 30S ribosomal subunits.</text>
</comment>
<comment type="subcellular location">
    <subcellularLocation>
        <location evidence="1">Cytoplasm</location>
    </subcellularLocation>
</comment>
<comment type="similarity">
    <text evidence="1">Belongs to the RimP family.</text>
</comment>
<reference key="1">
    <citation type="journal article" date="2008" name="Appl. Environ. Microbiol.">
        <title>The genome of Polaromonas sp. strain JS666: insights into the evolution of a hydrocarbon- and xenobiotic-degrading bacterium, and features of relevance to biotechnology.</title>
        <authorList>
            <person name="Mattes T.E."/>
            <person name="Alexander A.K."/>
            <person name="Richardson P.M."/>
            <person name="Munk A.C."/>
            <person name="Han C.S."/>
            <person name="Stothard P."/>
            <person name="Coleman N.V."/>
        </authorList>
    </citation>
    <scope>NUCLEOTIDE SEQUENCE [LARGE SCALE GENOMIC DNA]</scope>
    <source>
        <strain>JS666 / ATCC BAA-500</strain>
    </source>
</reference>
<evidence type="ECO:0000255" key="1">
    <source>
        <dbReference type="HAMAP-Rule" id="MF_01077"/>
    </source>
</evidence>
<name>RIMP_POLSJ</name>
<keyword id="KW-0963">Cytoplasm</keyword>
<keyword id="KW-1185">Reference proteome</keyword>
<keyword id="KW-0690">Ribosome biogenesis</keyword>
<gene>
    <name evidence="1" type="primary">rimP</name>
    <name type="ordered locus">Bpro_2424</name>
</gene>
<dbReference type="EMBL" id="CP000316">
    <property type="protein sequence ID" value="ABE44343.1"/>
    <property type="molecule type" value="Genomic_DNA"/>
</dbReference>
<dbReference type="RefSeq" id="WP_011483341.1">
    <property type="nucleotide sequence ID" value="NC_007948.1"/>
</dbReference>
<dbReference type="SMR" id="Q12AU9"/>
<dbReference type="STRING" id="296591.Bpro_2424"/>
<dbReference type="KEGG" id="pol:Bpro_2424"/>
<dbReference type="eggNOG" id="COG0779">
    <property type="taxonomic scope" value="Bacteria"/>
</dbReference>
<dbReference type="HOGENOM" id="CLU_070525_1_0_4"/>
<dbReference type="OrthoDB" id="9805006at2"/>
<dbReference type="Proteomes" id="UP000001983">
    <property type="component" value="Chromosome"/>
</dbReference>
<dbReference type="GO" id="GO:0005829">
    <property type="term" value="C:cytosol"/>
    <property type="evidence" value="ECO:0007669"/>
    <property type="project" value="TreeGrafter"/>
</dbReference>
<dbReference type="GO" id="GO:0000028">
    <property type="term" value="P:ribosomal small subunit assembly"/>
    <property type="evidence" value="ECO:0007669"/>
    <property type="project" value="TreeGrafter"/>
</dbReference>
<dbReference type="GO" id="GO:0006412">
    <property type="term" value="P:translation"/>
    <property type="evidence" value="ECO:0007669"/>
    <property type="project" value="TreeGrafter"/>
</dbReference>
<dbReference type="CDD" id="cd01734">
    <property type="entry name" value="YlxS_C"/>
    <property type="match status" value="1"/>
</dbReference>
<dbReference type="Gene3D" id="3.30.300.70">
    <property type="entry name" value="RimP-like superfamily, N-terminal"/>
    <property type="match status" value="1"/>
</dbReference>
<dbReference type="HAMAP" id="MF_01077">
    <property type="entry name" value="RimP"/>
    <property type="match status" value="1"/>
</dbReference>
<dbReference type="InterPro" id="IPR003728">
    <property type="entry name" value="Ribosome_maturation_RimP"/>
</dbReference>
<dbReference type="InterPro" id="IPR028998">
    <property type="entry name" value="RimP_C"/>
</dbReference>
<dbReference type="InterPro" id="IPR036847">
    <property type="entry name" value="RimP_C_sf"/>
</dbReference>
<dbReference type="InterPro" id="IPR028989">
    <property type="entry name" value="RimP_N"/>
</dbReference>
<dbReference type="InterPro" id="IPR035956">
    <property type="entry name" value="RimP_N_sf"/>
</dbReference>
<dbReference type="NCBIfam" id="NF000929">
    <property type="entry name" value="PRK00092.2-1"/>
    <property type="match status" value="1"/>
</dbReference>
<dbReference type="NCBIfam" id="NF011235">
    <property type="entry name" value="PRK14642.1"/>
    <property type="match status" value="1"/>
</dbReference>
<dbReference type="PANTHER" id="PTHR33867">
    <property type="entry name" value="RIBOSOME MATURATION FACTOR RIMP"/>
    <property type="match status" value="1"/>
</dbReference>
<dbReference type="PANTHER" id="PTHR33867:SF1">
    <property type="entry name" value="RIBOSOME MATURATION FACTOR RIMP"/>
    <property type="match status" value="1"/>
</dbReference>
<dbReference type="Pfam" id="PF02576">
    <property type="entry name" value="RimP_N"/>
    <property type="match status" value="1"/>
</dbReference>
<dbReference type="SUPFAM" id="SSF74942">
    <property type="entry name" value="YhbC-like, C-terminal domain"/>
    <property type="match status" value="1"/>
</dbReference>
<dbReference type="SUPFAM" id="SSF75420">
    <property type="entry name" value="YhbC-like, N-terminal domain"/>
    <property type="match status" value="1"/>
</dbReference>
<protein>
    <recommendedName>
        <fullName evidence="1">Ribosome maturation factor RimP</fullName>
    </recommendedName>
</protein>
<sequence length="200" mass="21771">MALQETIEQTVTGLGYELVEIERTGGGLLRVTIDMPYVSGAEQFINAEDCEKVTRQLQFVLEVEGADYSRLEVSSPGIDRPLRNEKDFERFAGELVDITLKAPIGVAASAGSAVSANRKKFRGTLERAAPKDGVAGWQIVWSDEPPVKPGQKVSKKKLPAPLQALGFTLDEIHQARLAPVVDFKGRKPKIVPGADKSSEK</sequence>
<proteinExistence type="inferred from homology"/>
<feature type="chain" id="PRO_1000136786" description="Ribosome maturation factor RimP">
    <location>
        <begin position="1"/>
        <end position="200"/>
    </location>
</feature>
<organism>
    <name type="scientific">Polaromonas sp. (strain JS666 / ATCC BAA-500)</name>
    <dbReference type="NCBI Taxonomy" id="296591"/>
    <lineage>
        <taxon>Bacteria</taxon>
        <taxon>Pseudomonadati</taxon>
        <taxon>Pseudomonadota</taxon>
        <taxon>Betaproteobacteria</taxon>
        <taxon>Burkholderiales</taxon>
        <taxon>Comamonadaceae</taxon>
        <taxon>Polaromonas</taxon>
    </lineage>
</organism>